<evidence type="ECO:0000255" key="1">
    <source>
        <dbReference type="HAMAP-Rule" id="MF_03116"/>
    </source>
</evidence>
<protein>
    <recommendedName>
        <fullName evidence="1">Methylthioribulose-1-phosphate dehydratase</fullName>
        <shortName evidence="1">MTRu-1-P dehydratase</shortName>
        <ecNumber evidence="1">4.2.1.109</ecNumber>
    </recommendedName>
</protein>
<sequence>MSSQDVLIHSDDPCHPANLICTLCKQFFHNNWCTGTGGGISIKDPNTNYYYLAPSGVQKEKMTPEDLFVMDAQTLEYLRSPKLYKPSACTPLFLACYQKKDAGAIIHTHSQNAVICSLVFGDEFRIANIEQIKAIPSGKVDPVTKKPMALSFFDTLKIPIIENMAHEDELIDDLHKTFKDYPDTCAVIVRRHGIFVWGPTIDKAKIFNEAIDYLMELAIKMYQMGIPPDCGIGEEKKHLKMASP</sequence>
<comment type="function">
    <text evidence="1">Catalyzes the dehydration of methylthioribulose-1-phosphate (MTRu-1-P) into 2,3-diketo-5-methylthiopentyl-1-phosphate (DK-MTP-1-P).</text>
</comment>
<comment type="catalytic activity">
    <reaction evidence="1">
        <text>5-(methylsulfanyl)-D-ribulose 1-phosphate = 5-methylsulfanyl-2,3-dioxopentyl phosphate + H2O</text>
        <dbReference type="Rhea" id="RHEA:15549"/>
        <dbReference type="ChEBI" id="CHEBI:15377"/>
        <dbReference type="ChEBI" id="CHEBI:58548"/>
        <dbReference type="ChEBI" id="CHEBI:58828"/>
        <dbReference type="EC" id="4.2.1.109"/>
    </reaction>
</comment>
<comment type="cofactor">
    <cofactor evidence="1">
        <name>Zn(2+)</name>
        <dbReference type="ChEBI" id="CHEBI:29105"/>
    </cofactor>
    <text evidence="1">Binds 1 zinc ion per subunit.</text>
</comment>
<comment type="pathway">
    <text evidence="1">Amino-acid biosynthesis; L-methionine biosynthesis via salvage pathway; L-methionine from S-methyl-5-thio-alpha-D-ribose 1-phosphate: step 2/6.</text>
</comment>
<comment type="subcellular location">
    <subcellularLocation>
        <location evidence="1">Cytoplasm</location>
    </subcellularLocation>
</comment>
<comment type="similarity">
    <text evidence="1">Belongs to the aldolase class II family. MtnB subfamily.</text>
</comment>
<accession>B5VLI6</accession>
<name>MTNB_YEAS6</name>
<feature type="chain" id="PRO_0000393845" description="Methylthioribulose-1-phosphate dehydratase">
    <location>
        <begin position="1"/>
        <end position="244"/>
    </location>
</feature>
<feature type="active site" description="Proton donor/acceptor" evidence="1">
    <location>
        <position position="130"/>
    </location>
</feature>
<feature type="binding site" evidence="1">
    <location>
        <position position="89"/>
    </location>
    <ligand>
        <name>substrate</name>
    </ligand>
</feature>
<feature type="binding site" evidence="1">
    <location>
        <position position="107"/>
    </location>
    <ligand>
        <name>Zn(2+)</name>
        <dbReference type="ChEBI" id="CHEBI:29105"/>
    </ligand>
</feature>
<feature type="binding site" evidence="1">
    <location>
        <position position="109"/>
    </location>
    <ligand>
        <name>Zn(2+)</name>
        <dbReference type="ChEBI" id="CHEBI:29105"/>
    </ligand>
</feature>
<feature type="binding site" evidence="1">
    <location>
        <position position="192"/>
    </location>
    <ligand>
        <name>Zn(2+)</name>
        <dbReference type="ChEBI" id="CHEBI:29105"/>
    </ligand>
</feature>
<organism>
    <name type="scientific">Saccharomyces cerevisiae (strain AWRI1631)</name>
    <name type="common">Baker's yeast</name>
    <dbReference type="NCBI Taxonomy" id="545124"/>
    <lineage>
        <taxon>Eukaryota</taxon>
        <taxon>Fungi</taxon>
        <taxon>Dikarya</taxon>
        <taxon>Ascomycota</taxon>
        <taxon>Saccharomycotina</taxon>
        <taxon>Saccharomycetes</taxon>
        <taxon>Saccharomycetales</taxon>
        <taxon>Saccharomycetaceae</taxon>
        <taxon>Saccharomyces</taxon>
    </lineage>
</organism>
<keyword id="KW-0028">Amino-acid biosynthesis</keyword>
<keyword id="KW-0963">Cytoplasm</keyword>
<keyword id="KW-0456">Lyase</keyword>
<keyword id="KW-0479">Metal-binding</keyword>
<keyword id="KW-0486">Methionine biosynthesis</keyword>
<keyword id="KW-0862">Zinc</keyword>
<proteinExistence type="inferred from homology"/>
<gene>
    <name evidence="1" type="primary">MDE1</name>
    <name type="ORF">AWRI1631_102220</name>
</gene>
<dbReference type="EC" id="4.2.1.109" evidence="1"/>
<dbReference type="EMBL" id="ABSV01001350">
    <property type="protein sequence ID" value="EDZ71209.1"/>
    <property type="molecule type" value="Genomic_DNA"/>
</dbReference>
<dbReference type="SMR" id="B5VLI6"/>
<dbReference type="UniPathway" id="UPA00904">
    <property type="reaction ID" value="UER00875"/>
</dbReference>
<dbReference type="Proteomes" id="UP000008988">
    <property type="component" value="Unassembled WGS sequence"/>
</dbReference>
<dbReference type="GO" id="GO:0005737">
    <property type="term" value="C:cytoplasm"/>
    <property type="evidence" value="ECO:0007669"/>
    <property type="project" value="UniProtKB-SubCell"/>
</dbReference>
<dbReference type="GO" id="GO:0046570">
    <property type="term" value="F:methylthioribulose 1-phosphate dehydratase activity"/>
    <property type="evidence" value="ECO:0007669"/>
    <property type="project" value="UniProtKB-UniRule"/>
</dbReference>
<dbReference type="GO" id="GO:0008270">
    <property type="term" value="F:zinc ion binding"/>
    <property type="evidence" value="ECO:0007669"/>
    <property type="project" value="UniProtKB-UniRule"/>
</dbReference>
<dbReference type="GO" id="GO:0019509">
    <property type="term" value="P:L-methionine salvage from methylthioadenosine"/>
    <property type="evidence" value="ECO:0007669"/>
    <property type="project" value="UniProtKB-UniRule"/>
</dbReference>
<dbReference type="CDD" id="cd00398">
    <property type="entry name" value="Aldolase_II"/>
    <property type="match status" value="1"/>
</dbReference>
<dbReference type="FunFam" id="3.40.225.10:FF:000003">
    <property type="entry name" value="Methylthioribulose-1-phosphate dehydratase"/>
    <property type="match status" value="1"/>
</dbReference>
<dbReference type="Gene3D" id="3.40.225.10">
    <property type="entry name" value="Class II aldolase/adducin N-terminal domain"/>
    <property type="match status" value="1"/>
</dbReference>
<dbReference type="HAMAP" id="MF_03116">
    <property type="entry name" value="Salvage_MtnB_euk"/>
    <property type="match status" value="1"/>
</dbReference>
<dbReference type="InterPro" id="IPR001303">
    <property type="entry name" value="Aldolase_II/adducin_N"/>
</dbReference>
<dbReference type="InterPro" id="IPR036409">
    <property type="entry name" value="Aldolase_II/adducin_N_sf"/>
</dbReference>
<dbReference type="InterPro" id="IPR017714">
    <property type="entry name" value="MethylthioRu-1-P_deHdtase_MtnB"/>
</dbReference>
<dbReference type="InterPro" id="IPR027514">
    <property type="entry name" value="Salvage_MtnB_euk"/>
</dbReference>
<dbReference type="NCBIfam" id="TIGR03328">
    <property type="entry name" value="salvage_mtnB"/>
    <property type="match status" value="1"/>
</dbReference>
<dbReference type="PANTHER" id="PTHR10640">
    <property type="entry name" value="METHYLTHIORIBULOSE-1-PHOSPHATE DEHYDRATASE"/>
    <property type="match status" value="1"/>
</dbReference>
<dbReference type="PANTHER" id="PTHR10640:SF7">
    <property type="entry name" value="METHYLTHIORIBULOSE-1-PHOSPHATE DEHYDRATASE"/>
    <property type="match status" value="1"/>
</dbReference>
<dbReference type="Pfam" id="PF00596">
    <property type="entry name" value="Aldolase_II"/>
    <property type="match status" value="1"/>
</dbReference>
<dbReference type="SMART" id="SM01007">
    <property type="entry name" value="Aldolase_II"/>
    <property type="match status" value="1"/>
</dbReference>
<dbReference type="SUPFAM" id="SSF53639">
    <property type="entry name" value="AraD/HMP-PK domain-like"/>
    <property type="match status" value="1"/>
</dbReference>
<reference key="1">
    <citation type="journal article" date="2008" name="FEMS Yeast Res.">
        <title>Comparative genome analysis of a Saccharomyces cerevisiae wine strain.</title>
        <authorList>
            <person name="Borneman A.R."/>
            <person name="Forgan A.H."/>
            <person name="Pretorius I.S."/>
            <person name="Chambers P.J."/>
        </authorList>
    </citation>
    <scope>NUCLEOTIDE SEQUENCE [LARGE SCALE GENOMIC DNA]</scope>
    <source>
        <strain>AWRI1631</strain>
    </source>
</reference>